<organism>
    <name type="scientific">Callithrix jacchus</name>
    <name type="common">White-tufted-ear marmoset</name>
    <dbReference type="NCBI Taxonomy" id="9483"/>
    <lineage>
        <taxon>Eukaryota</taxon>
        <taxon>Metazoa</taxon>
        <taxon>Chordata</taxon>
        <taxon>Craniata</taxon>
        <taxon>Vertebrata</taxon>
        <taxon>Euteleostomi</taxon>
        <taxon>Mammalia</taxon>
        <taxon>Eutheria</taxon>
        <taxon>Euarchontoglires</taxon>
        <taxon>Primates</taxon>
        <taxon>Haplorrhini</taxon>
        <taxon>Platyrrhini</taxon>
        <taxon>Cebidae</taxon>
        <taxon>Callitrichinae</taxon>
        <taxon>Callithrix</taxon>
        <taxon>Callithrix</taxon>
    </lineage>
</organism>
<feature type="signal peptide" evidence="5">
    <location>
        <begin position="1"/>
        <end position="25"/>
    </location>
</feature>
<feature type="chain" id="PRO_0000226061" description="Protein Wnt-2">
    <location>
        <begin position="26"/>
        <end position="360"/>
    </location>
</feature>
<feature type="lipid moiety-binding region" description="O-palmitoleoyl serine; by PORCN" evidence="4">
    <location>
        <position position="212"/>
    </location>
</feature>
<feature type="glycosylation site" description="N-linked (GlcNAc...) asparagine" evidence="5">
    <location>
        <position position="295"/>
    </location>
</feature>
<feature type="disulfide bond" evidence="3">
    <location>
        <begin position="76"/>
        <end position="87"/>
    </location>
</feature>
<feature type="disulfide bond" evidence="3">
    <location>
        <begin position="127"/>
        <end position="135"/>
    </location>
</feature>
<feature type="disulfide bond" evidence="3">
    <location>
        <begin position="137"/>
        <end position="157"/>
    </location>
</feature>
<feature type="disulfide bond" evidence="3">
    <location>
        <begin position="206"/>
        <end position="220"/>
    </location>
</feature>
<feature type="disulfide bond" evidence="3">
    <location>
        <begin position="208"/>
        <end position="215"/>
    </location>
</feature>
<feature type="disulfide bond" evidence="3">
    <location>
        <begin position="278"/>
        <end position="309"/>
    </location>
</feature>
<feature type="disulfide bond" evidence="3">
    <location>
        <begin position="294"/>
        <end position="304"/>
    </location>
</feature>
<feature type="disulfide bond" evidence="3">
    <location>
        <begin position="308"/>
        <end position="348"/>
    </location>
</feature>
<feature type="disulfide bond" evidence="3">
    <location>
        <begin position="324"/>
        <end position="339"/>
    </location>
</feature>
<feature type="disulfide bond" evidence="3">
    <location>
        <begin position="326"/>
        <end position="336"/>
    </location>
</feature>
<feature type="disulfide bond" evidence="3">
    <location>
        <begin position="331"/>
        <end position="332"/>
    </location>
</feature>
<comment type="function">
    <text evidence="1 2">Ligand for members of the frizzled family of seven transmembrane receptors. Functions in the canonical Wnt signaling pathway that results in activation of transcription factors of the TCF/LEF family (By similarity). Functions as a upstream regulator of FGF10 expression. Plays an important role in embryonic lung development. May contribute to embryonic brain development by regulating the proliferation of dopaminergic precursors and neurons (By similarity).</text>
</comment>
<comment type="subcellular location">
    <subcellularLocation>
        <location evidence="1">Secreted</location>
        <location evidence="1">Extracellular space</location>
        <location evidence="1">Extracellular matrix</location>
    </subcellularLocation>
    <subcellularLocation>
        <location evidence="1">Secreted</location>
    </subcellularLocation>
</comment>
<comment type="PTM">
    <text evidence="1">Palmitoleoylation is required for efficient binding to frizzled receptors. Depalmitoleoylation leads to Wnt signaling pathway inhibition.</text>
</comment>
<comment type="similarity">
    <text evidence="6">Belongs to the Wnt family.</text>
</comment>
<sequence length="360" mass="40475">MNSPLRGIWLWLPLLLTWLTPEVSSSWWYMGATGGSSRVMCDNVPGLVSSQRQLCHRHPDVMRAIGLGVTEWTSECQYQFRQHRWNCNTLDRDHSLFGRVLLRSSRESAFVYAISSAGVVFAVTRACSQGEVKSCSCDPKKMGSGKDSKGVFDWGGCSDNIDYGIKFARAFVDAKERKGKDARALMNLHNNRAGRKSVKRFLKQECKCHGVSGSCSLRTCWLAMADFRKTGDYLWRKYNGAIQVVMNQDGTGFTVANERFKKPTKNDLVYFENSPDYCIRDRETGSLGTAGRVCNLTSRGMDSCEVMCCGRGYDTSHVTRMIKCGCKFHWCCAVRCQDCLEALDVHTCKAPKNADWKSPT</sequence>
<gene>
    <name type="primary">WNT2</name>
</gene>
<protein>
    <recommendedName>
        <fullName>Protein Wnt-2</fullName>
    </recommendedName>
</protein>
<accession>Q2QLG1</accession>
<name>WNT2_CALJA</name>
<keyword id="KW-0217">Developmental protein</keyword>
<keyword id="KW-1015">Disulfide bond</keyword>
<keyword id="KW-0272">Extracellular matrix</keyword>
<keyword id="KW-0325">Glycoprotein</keyword>
<keyword id="KW-0449">Lipoprotein</keyword>
<keyword id="KW-1185">Reference proteome</keyword>
<keyword id="KW-0964">Secreted</keyword>
<keyword id="KW-0732">Signal</keyword>
<keyword id="KW-0879">Wnt signaling pathway</keyword>
<reference key="1">
    <citation type="submission" date="2005-10" db="EMBL/GenBank/DDBJ databases">
        <title>NISC comparative sequencing initiative.</title>
        <authorList>
            <person name="Antonellis A."/>
            <person name="Ayele K."/>
            <person name="Benjamin B."/>
            <person name="Blakesley R.W."/>
            <person name="Boakye A."/>
            <person name="Bouffard G.G."/>
            <person name="Brinkley C."/>
            <person name="Brooks S."/>
            <person name="Chu G."/>
            <person name="Coleman H."/>
            <person name="Engle J."/>
            <person name="Gestole M."/>
            <person name="Greene A."/>
            <person name="Guan X."/>
            <person name="Gupta J."/>
            <person name="Haghighi P."/>
            <person name="Han J."/>
            <person name="Hansen N."/>
            <person name="Ho S.-L."/>
            <person name="Hu P."/>
            <person name="Hunter G."/>
            <person name="Hurle B."/>
            <person name="Idol J.R."/>
            <person name="Kwong P."/>
            <person name="Laric P."/>
            <person name="Larson S."/>
            <person name="Lee-Lin S.-Q."/>
            <person name="Legaspi R."/>
            <person name="Madden M."/>
            <person name="Maduro Q.L."/>
            <person name="Maduro V.B."/>
            <person name="Margulies E.H."/>
            <person name="Masiello C."/>
            <person name="Maskeri B."/>
            <person name="McDowell J."/>
            <person name="Mojidi H.A."/>
            <person name="Mullikin J.C."/>
            <person name="Oestreicher J.S."/>
            <person name="Park M."/>
            <person name="Portnoy M.E."/>
            <person name="Prasad A."/>
            <person name="Puri O."/>
            <person name="Reddix-Dugue N."/>
            <person name="Schandler K."/>
            <person name="Schueler M.G."/>
            <person name="Sison C."/>
            <person name="Stantripop S."/>
            <person name="Stephen E."/>
            <person name="Taye A."/>
            <person name="Thomas J.W."/>
            <person name="Thomas P.J."/>
            <person name="Tsipouri V."/>
            <person name="Ung L."/>
            <person name="Vogt J.L."/>
            <person name="Wetherby K.D."/>
            <person name="Young A."/>
            <person name="Green E.D."/>
        </authorList>
    </citation>
    <scope>NUCLEOTIDE SEQUENCE [LARGE SCALE GENOMIC DNA]</scope>
</reference>
<dbReference type="EMBL" id="DP000014">
    <property type="protein sequence ID" value="ABA90395.1"/>
    <property type="molecule type" value="Genomic_DNA"/>
</dbReference>
<dbReference type="RefSeq" id="XP_002751822.1">
    <property type="nucleotide sequence ID" value="XM_002751776.6"/>
</dbReference>
<dbReference type="SMR" id="Q2QLG1"/>
<dbReference type="FunCoup" id="Q2QLG1">
    <property type="interactions" value="413"/>
</dbReference>
<dbReference type="STRING" id="9483.ENSCJAP00000009098"/>
<dbReference type="GlyCosmos" id="Q2QLG1">
    <property type="glycosylation" value="1 site, No reported glycans"/>
</dbReference>
<dbReference type="Ensembl" id="ENSCJAT00000009611.5">
    <property type="protein sequence ID" value="ENSCJAP00000009098.2"/>
    <property type="gene ID" value="ENSCJAG00000004983.5"/>
</dbReference>
<dbReference type="GeneID" id="100411308"/>
<dbReference type="KEGG" id="cjc:100411308"/>
<dbReference type="CTD" id="7472"/>
<dbReference type="eggNOG" id="KOG3913">
    <property type="taxonomic scope" value="Eukaryota"/>
</dbReference>
<dbReference type="GeneTree" id="ENSGT00940000159231"/>
<dbReference type="HOGENOM" id="CLU_033039_1_4_1"/>
<dbReference type="InParanoid" id="Q2QLG1"/>
<dbReference type="OMA" id="ITRMTKC"/>
<dbReference type="OrthoDB" id="5945655at2759"/>
<dbReference type="TreeFam" id="TF105310"/>
<dbReference type="Proteomes" id="UP000008225">
    <property type="component" value="Chromosome 8"/>
</dbReference>
<dbReference type="Bgee" id="ENSCJAG00000004983">
    <property type="expression patterns" value="Expressed in cerebellum and 2 other cell types or tissues"/>
</dbReference>
<dbReference type="GO" id="GO:0005737">
    <property type="term" value="C:cytoplasm"/>
    <property type="evidence" value="ECO:0007669"/>
    <property type="project" value="Ensembl"/>
</dbReference>
<dbReference type="GO" id="GO:0005615">
    <property type="term" value="C:extracellular space"/>
    <property type="evidence" value="ECO:0007669"/>
    <property type="project" value="TreeGrafter"/>
</dbReference>
<dbReference type="GO" id="GO:0005125">
    <property type="term" value="F:cytokine activity"/>
    <property type="evidence" value="ECO:0007669"/>
    <property type="project" value="Ensembl"/>
</dbReference>
<dbReference type="GO" id="GO:0005109">
    <property type="term" value="F:frizzled binding"/>
    <property type="evidence" value="ECO:0007669"/>
    <property type="project" value="Ensembl"/>
</dbReference>
<dbReference type="GO" id="GO:0055009">
    <property type="term" value="P:atrial cardiac muscle tissue morphogenesis"/>
    <property type="evidence" value="ECO:0007669"/>
    <property type="project" value="Ensembl"/>
</dbReference>
<dbReference type="GO" id="GO:0060070">
    <property type="term" value="P:canonical Wnt signaling pathway"/>
    <property type="evidence" value="ECO:0007669"/>
    <property type="project" value="Ensembl"/>
</dbReference>
<dbReference type="GO" id="GO:0060317">
    <property type="term" value="P:cardiac epithelial to mesenchymal transition"/>
    <property type="evidence" value="ECO:0007669"/>
    <property type="project" value="Ensembl"/>
</dbReference>
<dbReference type="GO" id="GO:0060038">
    <property type="term" value="P:cardiac muscle cell proliferation"/>
    <property type="evidence" value="ECO:0007669"/>
    <property type="project" value="Ensembl"/>
</dbReference>
<dbReference type="GO" id="GO:0045165">
    <property type="term" value="P:cell fate commitment"/>
    <property type="evidence" value="ECO:0007669"/>
    <property type="project" value="TreeGrafter"/>
</dbReference>
<dbReference type="GO" id="GO:0033278">
    <property type="term" value="P:cell proliferation in midbrain"/>
    <property type="evidence" value="ECO:0007669"/>
    <property type="project" value="Ensembl"/>
</dbReference>
<dbReference type="GO" id="GO:0007267">
    <property type="term" value="P:cell-cell signaling"/>
    <property type="evidence" value="ECO:0007669"/>
    <property type="project" value="Ensembl"/>
</dbReference>
<dbReference type="GO" id="GO:0071560">
    <property type="term" value="P:cellular response to transforming growth factor beta stimulus"/>
    <property type="evidence" value="ECO:0007669"/>
    <property type="project" value="Ensembl"/>
</dbReference>
<dbReference type="GO" id="GO:0060502">
    <property type="term" value="P:epithelial cell proliferation involved in lung morphogenesis"/>
    <property type="evidence" value="ECO:0007669"/>
    <property type="project" value="Ensembl"/>
</dbReference>
<dbReference type="GO" id="GO:0060716">
    <property type="term" value="P:labyrinthine layer blood vessel development"/>
    <property type="evidence" value="ECO:0007669"/>
    <property type="project" value="Ensembl"/>
</dbReference>
<dbReference type="GO" id="GO:0060492">
    <property type="term" value="P:lung induction"/>
    <property type="evidence" value="ECO:0007669"/>
    <property type="project" value="Ensembl"/>
</dbReference>
<dbReference type="GO" id="GO:0061180">
    <property type="term" value="P:mammary gland epithelium development"/>
    <property type="evidence" value="ECO:0007669"/>
    <property type="project" value="Ensembl"/>
</dbReference>
<dbReference type="GO" id="GO:0010463">
    <property type="term" value="P:mesenchymal cell proliferation"/>
    <property type="evidence" value="ECO:0007669"/>
    <property type="project" value="Ensembl"/>
</dbReference>
<dbReference type="GO" id="GO:1904948">
    <property type="term" value="P:midbrain dopaminergic neuron differentiation"/>
    <property type="evidence" value="ECO:0007669"/>
    <property type="project" value="Ensembl"/>
</dbReference>
<dbReference type="GO" id="GO:0060045">
    <property type="term" value="P:positive regulation of cardiac muscle cell proliferation"/>
    <property type="evidence" value="ECO:0007669"/>
    <property type="project" value="Ensembl"/>
</dbReference>
<dbReference type="GO" id="GO:0060501">
    <property type="term" value="P:positive regulation of epithelial cell proliferation involved in lung morphogenesis"/>
    <property type="evidence" value="ECO:0007669"/>
    <property type="project" value="Ensembl"/>
</dbReference>
<dbReference type="GO" id="GO:0048146">
    <property type="term" value="P:positive regulation of fibroblast proliferation"/>
    <property type="evidence" value="ECO:0007669"/>
    <property type="project" value="Ensembl"/>
</dbReference>
<dbReference type="GO" id="GO:0002053">
    <property type="term" value="P:positive regulation of mesenchymal cell proliferation"/>
    <property type="evidence" value="ECO:0007669"/>
    <property type="project" value="Ensembl"/>
</dbReference>
<dbReference type="GO" id="GO:0050769">
    <property type="term" value="P:positive regulation of neurogenesis"/>
    <property type="evidence" value="ECO:0007669"/>
    <property type="project" value="Ensembl"/>
</dbReference>
<dbReference type="GO" id="GO:0045944">
    <property type="term" value="P:positive regulation of transcription by RNA polymerase II"/>
    <property type="evidence" value="ECO:0007669"/>
    <property type="project" value="Ensembl"/>
</dbReference>
<dbReference type="CDD" id="cd19345">
    <property type="entry name" value="Wnt_Wnt2"/>
    <property type="match status" value="1"/>
</dbReference>
<dbReference type="FunFam" id="3.30.2460.20:FF:000001">
    <property type="entry name" value="Wnt homolog"/>
    <property type="match status" value="1"/>
</dbReference>
<dbReference type="Gene3D" id="3.30.2460.20">
    <property type="match status" value="1"/>
</dbReference>
<dbReference type="InterPro" id="IPR005817">
    <property type="entry name" value="Wnt"/>
</dbReference>
<dbReference type="InterPro" id="IPR009140">
    <property type="entry name" value="Wnt2"/>
</dbReference>
<dbReference type="InterPro" id="IPR043158">
    <property type="entry name" value="Wnt_C"/>
</dbReference>
<dbReference type="InterPro" id="IPR018161">
    <property type="entry name" value="Wnt_CS"/>
</dbReference>
<dbReference type="PANTHER" id="PTHR12027:SF86">
    <property type="entry name" value="PROTEIN WNT-2"/>
    <property type="match status" value="1"/>
</dbReference>
<dbReference type="PANTHER" id="PTHR12027">
    <property type="entry name" value="WNT RELATED"/>
    <property type="match status" value="1"/>
</dbReference>
<dbReference type="Pfam" id="PF00110">
    <property type="entry name" value="wnt"/>
    <property type="match status" value="1"/>
</dbReference>
<dbReference type="PRINTS" id="PR01842">
    <property type="entry name" value="WNT2PROTEIN"/>
</dbReference>
<dbReference type="PRINTS" id="PR01349">
    <property type="entry name" value="WNTPROTEIN"/>
</dbReference>
<dbReference type="SMART" id="SM00097">
    <property type="entry name" value="WNT1"/>
    <property type="match status" value="1"/>
</dbReference>
<dbReference type="PROSITE" id="PS00246">
    <property type="entry name" value="WNT1"/>
    <property type="match status" value="1"/>
</dbReference>
<proteinExistence type="inferred from homology"/>
<evidence type="ECO:0000250" key="1">
    <source>
        <dbReference type="UniProtKB" id="P09544"/>
    </source>
</evidence>
<evidence type="ECO:0000250" key="2">
    <source>
        <dbReference type="UniProtKB" id="P21552"/>
    </source>
</evidence>
<evidence type="ECO:0000250" key="3">
    <source>
        <dbReference type="UniProtKB" id="P28026"/>
    </source>
</evidence>
<evidence type="ECO:0000250" key="4">
    <source>
        <dbReference type="UniProtKB" id="P56704"/>
    </source>
</evidence>
<evidence type="ECO:0000255" key="5"/>
<evidence type="ECO:0000305" key="6"/>